<sequence length="81" mass="9635">MTMSLEVFEKLEAKVQQAIDTITLLQMEIEELKEKNNSLSQEVQNAQHQREELERENNHLKEQQNGWQERLQALLGRMEEV</sequence>
<comment type="function">
    <text evidence="1">Non-essential, abundant cell division factor that is required for proper Z-ring formation. It is recruited early to the divisome by direct interaction with FtsZ, stimulating Z-ring assembly and thereby promoting cell division earlier in the cell cycle. Its recruitment to the Z-ring requires functional FtsA or ZipA.</text>
</comment>
<comment type="subunit">
    <text evidence="1">Homodimer. The ends of the coiled-coil dimer bind to each other, forming polymers. Interacts with FtsZ.</text>
</comment>
<comment type="subcellular location">
    <subcellularLocation>
        <location evidence="1">Cytoplasm</location>
    </subcellularLocation>
    <text evidence="1">Localizes to the septum at mid-cell, in a FtsZ-like pattern.</text>
</comment>
<comment type="similarity">
    <text evidence="1">Belongs to the ZapB family.</text>
</comment>
<accession>B7M6X9</accession>
<reference key="1">
    <citation type="journal article" date="2009" name="PLoS Genet.">
        <title>Organised genome dynamics in the Escherichia coli species results in highly diverse adaptive paths.</title>
        <authorList>
            <person name="Touchon M."/>
            <person name="Hoede C."/>
            <person name="Tenaillon O."/>
            <person name="Barbe V."/>
            <person name="Baeriswyl S."/>
            <person name="Bidet P."/>
            <person name="Bingen E."/>
            <person name="Bonacorsi S."/>
            <person name="Bouchier C."/>
            <person name="Bouvet O."/>
            <person name="Calteau A."/>
            <person name="Chiapello H."/>
            <person name="Clermont O."/>
            <person name="Cruveiller S."/>
            <person name="Danchin A."/>
            <person name="Diard M."/>
            <person name="Dossat C."/>
            <person name="Karoui M.E."/>
            <person name="Frapy E."/>
            <person name="Garry L."/>
            <person name="Ghigo J.M."/>
            <person name="Gilles A.M."/>
            <person name="Johnson J."/>
            <person name="Le Bouguenec C."/>
            <person name="Lescat M."/>
            <person name="Mangenot S."/>
            <person name="Martinez-Jehanne V."/>
            <person name="Matic I."/>
            <person name="Nassif X."/>
            <person name="Oztas S."/>
            <person name="Petit M.A."/>
            <person name="Pichon C."/>
            <person name="Rouy Z."/>
            <person name="Ruf C.S."/>
            <person name="Schneider D."/>
            <person name="Tourret J."/>
            <person name="Vacherie B."/>
            <person name="Vallenet D."/>
            <person name="Medigue C."/>
            <person name="Rocha E.P.C."/>
            <person name="Denamur E."/>
        </authorList>
    </citation>
    <scope>NUCLEOTIDE SEQUENCE [LARGE SCALE GENOMIC DNA]</scope>
    <source>
        <strain>IAI1</strain>
    </source>
</reference>
<feature type="chain" id="PRO_1000138432" description="Cell division protein ZapB">
    <location>
        <begin position="1"/>
        <end position="81"/>
    </location>
</feature>
<feature type="region of interest" description="Disordered" evidence="2">
    <location>
        <begin position="36"/>
        <end position="67"/>
    </location>
</feature>
<feature type="coiled-coil region" evidence="1">
    <location>
        <begin position="5"/>
        <end position="81"/>
    </location>
</feature>
<feature type="compositionally biased region" description="Polar residues" evidence="2">
    <location>
        <begin position="37"/>
        <end position="47"/>
    </location>
</feature>
<feature type="compositionally biased region" description="Basic and acidic residues" evidence="2">
    <location>
        <begin position="48"/>
        <end position="62"/>
    </location>
</feature>
<feature type="modified residue" description="N6-acetyllysine" evidence="1">
    <location>
        <position position="10"/>
    </location>
</feature>
<protein>
    <recommendedName>
        <fullName evidence="1">Cell division protein ZapB</fullName>
    </recommendedName>
</protein>
<dbReference type="EMBL" id="CU928160">
    <property type="protein sequence ID" value="CAR00904.1"/>
    <property type="molecule type" value="Genomic_DNA"/>
</dbReference>
<dbReference type="RefSeq" id="WP_001296623.1">
    <property type="nucleotide sequence ID" value="NC_011741.1"/>
</dbReference>
<dbReference type="SMR" id="B7M6X9"/>
<dbReference type="GeneID" id="93777970"/>
<dbReference type="KEGG" id="ecr:ECIAI1_4133"/>
<dbReference type="HOGENOM" id="CLU_171174_2_0_6"/>
<dbReference type="GO" id="GO:0005737">
    <property type="term" value="C:cytoplasm"/>
    <property type="evidence" value="ECO:0007669"/>
    <property type="project" value="UniProtKB-SubCell"/>
</dbReference>
<dbReference type="GO" id="GO:0000917">
    <property type="term" value="P:division septum assembly"/>
    <property type="evidence" value="ECO:0007669"/>
    <property type="project" value="UniProtKB-KW"/>
</dbReference>
<dbReference type="GO" id="GO:0043093">
    <property type="term" value="P:FtsZ-dependent cytokinesis"/>
    <property type="evidence" value="ECO:0007669"/>
    <property type="project" value="UniProtKB-UniRule"/>
</dbReference>
<dbReference type="FunFam" id="1.20.5.340:FF:000014">
    <property type="entry name" value="Cell division protein ZapB"/>
    <property type="match status" value="1"/>
</dbReference>
<dbReference type="Gene3D" id="1.20.5.340">
    <property type="match status" value="1"/>
</dbReference>
<dbReference type="HAMAP" id="MF_01196">
    <property type="entry name" value="ZapB"/>
    <property type="match status" value="1"/>
</dbReference>
<dbReference type="InterPro" id="IPR009252">
    <property type="entry name" value="Cell_div_ZapB"/>
</dbReference>
<dbReference type="NCBIfam" id="NF011951">
    <property type="entry name" value="PRK15422.1"/>
    <property type="match status" value="1"/>
</dbReference>
<dbReference type="Pfam" id="PF06005">
    <property type="entry name" value="ZapB"/>
    <property type="match status" value="1"/>
</dbReference>
<evidence type="ECO:0000255" key="1">
    <source>
        <dbReference type="HAMAP-Rule" id="MF_01196"/>
    </source>
</evidence>
<evidence type="ECO:0000256" key="2">
    <source>
        <dbReference type="SAM" id="MobiDB-lite"/>
    </source>
</evidence>
<keyword id="KW-0007">Acetylation</keyword>
<keyword id="KW-0131">Cell cycle</keyword>
<keyword id="KW-0132">Cell division</keyword>
<keyword id="KW-0175">Coiled coil</keyword>
<keyword id="KW-0963">Cytoplasm</keyword>
<keyword id="KW-0717">Septation</keyword>
<gene>
    <name evidence="1" type="primary">zapB</name>
    <name type="ordered locus">ECIAI1_4133</name>
</gene>
<organism>
    <name type="scientific">Escherichia coli O8 (strain IAI1)</name>
    <dbReference type="NCBI Taxonomy" id="585034"/>
    <lineage>
        <taxon>Bacteria</taxon>
        <taxon>Pseudomonadati</taxon>
        <taxon>Pseudomonadota</taxon>
        <taxon>Gammaproteobacteria</taxon>
        <taxon>Enterobacterales</taxon>
        <taxon>Enterobacteriaceae</taxon>
        <taxon>Escherichia</taxon>
    </lineage>
</organism>
<proteinExistence type="inferred from homology"/>
<name>ZAPB_ECO8A</name>